<keyword id="KW-0067">ATP-binding</keyword>
<keyword id="KW-0143">Chaperone</keyword>
<keyword id="KW-0963">Cytoplasm</keyword>
<keyword id="KW-0413">Isomerase</keyword>
<keyword id="KW-0547">Nucleotide-binding</keyword>
<accession>O68309</accession>
<reference key="1">
    <citation type="submission" date="1997-10" db="EMBL/GenBank/DDBJ databases">
        <title>Aeromonas salmonicida groE operon.</title>
        <authorList>
            <person name="Hanniffy S.B."/>
            <person name="Powell R."/>
        </authorList>
    </citation>
    <scope>NUCLEOTIDE SEQUENCE [GENOMIC DNA]</scope>
    <source>
        <strain>NCIMB 835 / JCM 8195</strain>
    </source>
</reference>
<feature type="chain" id="PRO_0000063255" description="Chaperonin GroEL">
    <location>
        <begin position="1"/>
        <end position="544"/>
    </location>
</feature>
<feature type="binding site" evidence="1">
    <location>
        <begin position="30"/>
        <end position="33"/>
    </location>
    <ligand>
        <name>ATP</name>
        <dbReference type="ChEBI" id="CHEBI:30616"/>
    </ligand>
</feature>
<feature type="binding site" evidence="1">
    <location>
        <position position="51"/>
    </location>
    <ligand>
        <name>ATP</name>
        <dbReference type="ChEBI" id="CHEBI:30616"/>
    </ligand>
</feature>
<feature type="binding site" evidence="1">
    <location>
        <begin position="87"/>
        <end position="91"/>
    </location>
    <ligand>
        <name>ATP</name>
        <dbReference type="ChEBI" id="CHEBI:30616"/>
    </ligand>
</feature>
<feature type="binding site" evidence="1">
    <location>
        <position position="415"/>
    </location>
    <ligand>
        <name>ATP</name>
        <dbReference type="ChEBI" id="CHEBI:30616"/>
    </ligand>
</feature>
<feature type="binding site" evidence="1">
    <location>
        <position position="495"/>
    </location>
    <ligand>
        <name>ATP</name>
        <dbReference type="ChEBI" id="CHEBI:30616"/>
    </ligand>
</feature>
<proteinExistence type="inferred from homology"/>
<gene>
    <name evidence="1" type="primary">groEL</name>
    <name evidence="1" type="synonym">groL</name>
    <name type="synonym">mopA</name>
</gene>
<name>CH60_AERSA</name>
<protein>
    <recommendedName>
        <fullName evidence="1">Chaperonin GroEL</fullName>
        <ecNumber evidence="1">5.6.1.7</ecNumber>
    </recommendedName>
    <alternativeName>
        <fullName evidence="1">60 kDa chaperonin</fullName>
    </alternativeName>
    <alternativeName>
        <fullName evidence="1">Chaperonin-60</fullName>
        <shortName evidence="1">Cpn60</shortName>
    </alternativeName>
</protein>
<comment type="function">
    <text evidence="1">Together with its co-chaperonin GroES, plays an essential role in assisting protein folding. The GroEL-GroES system forms a nano-cage that allows encapsulation of the non-native substrate proteins and provides a physical environment optimized to promote and accelerate protein folding.</text>
</comment>
<comment type="catalytic activity">
    <reaction evidence="1">
        <text>ATP + H2O + a folded polypeptide = ADP + phosphate + an unfolded polypeptide.</text>
        <dbReference type="EC" id="5.6.1.7"/>
    </reaction>
</comment>
<comment type="subunit">
    <text evidence="1">Forms a cylinder of 14 subunits composed of two heptameric rings stacked back-to-back. Interacts with the co-chaperonin GroES.</text>
</comment>
<comment type="subcellular location">
    <subcellularLocation>
        <location evidence="1">Cytoplasm</location>
    </subcellularLocation>
</comment>
<comment type="similarity">
    <text evidence="1">Belongs to the chaperonin (HSP60) family.</text>
</comment>
<dbReference type="EC" id="5.6.1.7" evidence="1"/>
<dbReference type="EMBL" id="AF030975">
    <property type="protein sequence ID" value="AAC09226.1"/>
    <property type="molecule type" value="Genomic_DNA"/>
</dbReference>
<dbReference type="SMR" id="O68309"/>
<dbReference type="STRING" id="1233098.GCA_000315855_02977"/>
<dbReference type="GO" id="GO:0005737">
    <property type="term" value="C:cytoplasm"/>
    <property type="evidence" value="ECO:0007669"/>
    <property type="project" value="UniProtKB-SubCell"/>
</dbReference>
<dbReference type="GO" id="GO:0005524">
    <property type="term" value="F:ATP binding"/>
    <property type="evidence" value="ECO:0007669"/>
    <property type="project" value="UniProtKB-UniRule"/>
</dbReference>
<dbReference type="GO" id="GO:0140662">
    <property type="term" value="F:ATP-dependent protein folding chaperone"/>
    <property type="evidence" value="ECO:0007669"/>
    <property type="project" value="InterPro"/>
</dbReference>
<dbReference type="GO" id="GO:0016853">
    <property type="term" value="F:isomerase activity"/>
    <property type="evidence" value="ECO:0007669"/>
    <property type="project" value="UniProtKB-KW"/>
</dbReference>
<dbReference type="GO" id="GO:0051082">
    <property type="term" value="F:unfolded protein binding"/>
    <property type="evidence" value="ECO:0007669"/>
    <property type="project" value="UniProtKB-UniRule"/>
</dbReference>
<dbReference type="GO" id="GO:0042026">
    <property type="term" value="P:protein refolding"/>
    <property type="evidence" value="ECO:0007669"/>
    <property type="project" value="UniProtKB-UniRule"/>
</dbReference>
<dbReference type="CDD" id="cd03344">
    <property type="entry name" value="GroEL"/>
    <property type="match status" value="1"/>
</dbReference>
<dbReference type="FunFam" id="1.10.560.10:FF:000001">
    <property type="entry name" value="60 kDa chaperonin"/>
    <property type="match status" value="1"/>
</dbReference>
<dbReference type="FunFam" id="3.50.7.10:FF:000001">
    <property type="entry name" value="60 kDa chaperonin"/>
    <property type="match status" value="1"/>
</dbReference>
<dbReference type="Gene3D" id="3.50.7.10">
    <property type="entry name" value="GroEL"/>
    <property type="match status" value="1"/>
</dbReference>
<dbReference type="Gene3D" id="1.10.560.10">
    <property type="entry name" value="GroEL-like equatorial domain"/>
    <property type="match status" value="1"/>
</dbReference>
<dbReference type="Gene3D" id="3.30.260.10">
    <property type="entry name" value="TCP-1-like chaperonin intermediate domain"/>
    <property type="match status" value="1"/>
</dbReference>
<dbReference type="HAMAP" id="MF_00600">
    <property type="entry name" value="CH60"/>
    <property type="match status" value="1"/>
</dbReference>
<dbReference type="InterPro" id="IPR018370">
    <property type="entry name" value="Chaperonin_Cpn60_CS"/>
</dbReference>
<dbReference type="InterPro" id="IPR001844">
    <property type="entry name" value="Cpn60/GroEL"/>
</dbReference>
<dbReference type="InterPro" id="IPR002423">
    <property type="entry name" value="Cpn60/GroEL/TCP-1"/>
</dbReference>
<dbReference type="InterPro" id="IPR027409">
    <property type="entry name" value="GroEL-like_apical_dom_sf"/>
</dbReference>
<dbReference type="InterPro" id="IPR027413">
    <property type="entry name" value="GROEL-like_equatorial_sf"/>
</dbReference>
<dbReference type="InterPro" id="IPR027410">
    <property type="entry name" value="TCP-1-like_intermed_sf"/>
</dbReference>
<dbReference type="NCBIfam" id="TIGR02348">
    <property type="entry name" value="GroEL"/>
    <property type="match status" value="1"/>
</dbReference>
<dbReference type="NCBIfam" id="NF000592">
    <property type="entry name" value="PRK00013.1"/>
    <property type="match status" value="1"/>
</dbReference>
<dbReference type="NCBIfam" id="NF009487">
    <property type="entry name" value="PRK12849.1"/>
    <property type="match status" value="1"/>
</dbReference>
<dbReference type="NCBIfam" id="NF009488">
    <property type="entry name" value="PRK12850.1"/>
    <property type="match status" value="1"/>
</dbReference>
<dbReference type="NCBIfam" id="NF009489">
    <property type="entry name" value="PRK12851.1"/>
    <property type="match status" value="1"/>
</dbReference>
<dbReference type="PANTHER" id="PTHR45633">
    <property type="entry name" value="60 KDA HEAT SHOCK PROTEIN, MITOCHONDRIAL"/>
    <property type="match status" value="1"/>
</dbReference>
<dbReference type="Pfam" id="PF00118">
    <property type="entry name" value="Cpn60_TCP1"/>
    <property type="match status" value="1"/>
</dbReference>
<dbReference type="PRINTS" id="PR00298">
    <property type="entry name" value="CHAPERONIN60"/>
</dbReference>
<dbReference type="SUPFAM" id="SSF52029">
    <property type="entry name" value="GroEL apical domain-like"/>
    <property type="match status" value="1"/>
</dbReference>
<dbReference type="SUPFAM" id="SSF48592">
    <property type="entry name" value="GroEL equatorial domain-like"/>
    <property type="match status" value="1"/>
</dbReference>
<dbReference type="SUPFAM" id="SSF54849">
    <property type="entry name" value="GroEL-intermediate domain like"/>
    <property type="match status" value="1"/>
</dbReference>
<dbReference type="PROSITE" id="PS00296">
    <property type="entry name" value="CHAPERONINS_CPN60"/>
    <property type="match status" value="1"/>
</dbReference>
<organism>
    <name type="scientific">Aeromonas salmonicida</name>
    <dbReference type="NCBI Taxonomy" id="645"/>
    <lineage>
        <taxon>Bacteria</taxon>
        <taxon>Pseudomonadati</taxon>
        <taxon>Pseudomonadota</taxon>
        <taxon>Gammaproteobacteria</taxon>
        <taxon>Aeromonadales</taxon>
        <taxon>Aeromonadaceae</taxon>
        <taxon>Aeromonas</taxon>
    </lineage>
</organism>
<evidence type="ECO:0000255" key="1">
    <source>
        <dbReference type="HAMAP-Rule" id="MF_00600"/>
    </source>
</evidence>
<sequence length="544" mass="57320">MAAKEVKFGNEARIKMLEGVNILADAVKVTLGPKGRNVVLDKSFGAPTITKDGVSVAREIELEDKFQNMGAQMVKEVASKANDAAGDGTTTATVLAQAIVNEGLKAVAAGMNPMDLKRGIDKAVIAAVAELQVLSQPCADNNAIAQVGTISANSDEKVGRLIAEAMDKVGRDGVITVEDGQGLDDELAVVEGMQFDRGYLSPYFVNKPETGAVELDDPFILLVDKKVSNIREMLPVLEGVAKAGKPLLIVAEDVEGEALATLVVNTMRGIVKVAAVKAPGFGDRRKAMLQDIAMLTSGGTVIEEVGMELEKATLEDLGRAKRIVITKENTTIIDGVGDAALIESRVAQIRQQIEETSSDYDREKLQERVAKLAGGVAVIKVGAATEVEMKEKKARVDDALHATRAAVEEGVVAGGGVALVRVAAKLAGLRGDNEDQNVGIKVALRAMEAPLRQIVINAGEEASVIANAVKNGEGNFGYNAYTEQYGDMLAMGILDPTKVTRSALQFASSIAGLMITTECMITELPKKDTPAMPDMGGMGGMGMM</sequence>